<dbReference type="EMBL" id="AB025619">
    <property type="protein sequence ID" value="BAB09132.1"/>
    <property type="molecule type" value="Genomic_DNA"/>
</dbReference>
<dbReference type="EMBL" id="CP002688">
    <property type="protein sequence ID" value="AED95949.1"/>
    <property type="molecule type" value="Genomic_DNA"/>
</dbReference>
<dbReference type="EMBL" id="DQ056712">
    <property type="protein sequence ID" value="AAY78858.1"/>
    <property type="molecule type" value="mRNA"/>
</dbReference>
<dbReference type="RefSeq" id="NP_199858.1">
    <property type="nucleotide sequence ID" value="NM_124429.1"/>
</dbReference>
<dbReference type="SMR" id="Q9FGP8"/>
<dbReference type="BioGRID" id="20361">
    <property type="interactions" value="17"/>
</dbReference>
<dbReference type="FunCoup" id="Q9FGP8">
    <property type="interactions" value="165"/>
</dbReference>
<dbReference type="IntAct" id="Q9FGP8">
    <property type="interactions" value="14"/>
</dbReference>
<dbReference type="STRING" id="3702.Q9FGP8"/>
<dbReference type="iPTMnet" id="Q9FGP8"/>
<dbReference type="PaxDb" id="3702-AT5G50470.1"/>
<dbReference type="EnsemblPlants" id="AT5G50470.1">
    <property type="protein sequence ID" value="AT5G50470.1"/>
    <property type="gene ID" value="AT5G50470"/>
</dbReference>
<dbReference type="GeneID" id="835115"/>
<dbReference type="Gramene" id="AT5G50470.1">
    <property type="protein sequence ID" value="AT5G50470.1"/>
    <property type="gene ID" value="AT5G50470"/>
</dbReference>
<dbReference type="KEGG" id="ath:AT5G50470"/>
<dbReference type="Araport" id="AT5G50470"/>
<dbReference type="TAIR" id="AT5G50470">
    <property type="gene designation" value="NF-YC7"/>
</dbReference>
<dbReference type="eggNOG" id="KOG1657">
    <property type="taxonomic scope" value="Eukaryota"/>
</dbReference>
<dbReference type="HOGENOM" id="CLU_045277_0_2_1"/>
<dbReference type="InParanoid" id="Q9FGP8"/>
<dbReference type="OMA" id="ISKACEM"/>
<dbReference type="PhylomeDB" id="Q9FGP8"/>
<dbReference type="PRO" id="PR:Q9FGP8"/>
<dbReference type="Proteomes" id="UP000006548">
    <property type="component" value="Chromosome 5"/>
</dbReference>
<dbReference type="ExpressionAtlas" id="Q9FGP8">
    <property type="expression patterns" value="baseline and differential"/>
</dbReference>
<dbReference type="GO" id="GO:0005634">
    <property type="term" value="C:nucleus"/>
    <property type="evidence" value="ECO:0007669"/>
    <property type="project" value="UniProtKB-SubCell"/>
</dbReference>
<dbReference type="GO" id="GO:0003677">
    <property type="term" value="F:DNA binding"/>
    <property type="evidence" value="ECO:0007669"/>
    <property type="project" value="UniProtKB-KW"/>
</dbReference>
<dbReference type="GO" id="GO:0003700">
    <property type="term" value="F:DNA-binding transcription factor activity"/>
    <property type="evidence" value="ECO:0000250"/>
    <property type="project" value="TAIR"/>
</dbReference>
<dbReference type="GO" id="GO:0046982">
    <property type="term" value="F:protein heterodimerization activity"/>
    <property type="evidence" value="ECO:0007669"/>
    <property type="project" value="InterPro"/>
</dbReference>
<dbReference type="CDD" id="cd22908">
    <property type="entry name" value="HFD_NFYC-like"/>
    <property type="match status" value="1"/>
</dbReference>
<dbReference type="FunFam" id="1.10.20.10:FF:000062">
    <property type="entry name" value="Nuclear transcription factor Y subunit C"/>
    <property type="match status" value="1"/>
</dbReference>
<dbReference type="Gene3D" id="1.10.20.10">
    <property type="entry name" value="Histone, subunit A"/>
    <property type="match status" value="1"/>
</dbReference>
<dbReference type="InterPro" id="IPR003958">
    <property type="entry name" value="CBFA_NFYB_domain"/>
</dbReference>
<dbReference type="InterPro" id="IPR009072">
    <property type="entry name" value="Histone-fold"/>
</dbReference>
<dbReference type="InterPro" id="IPR050568">
    <property type="entry name" value="Transcr_DNA_Rep_Reg"/>
</dbReference>
<dbReference type="PANTHER" id="PTHR10252">
    <property type="entry name" value="HISTONE-LIKE TRANSCRIPTION FACTOR CCAAT-RELATED"/>
    <property type="match status" value="1"/>
</dbReference>
<dbReference type="PANTHER" id="PTHR10252:SF8">
    <property type="entry name" value="NUCLEAR TRANSCRIPTION FACTOR Y SUBUNIT GAMMA"/>
    <property type="match status" value="1"/>
</dbReference>
<dbReference type="Pfam" id="PF00808">
    <property type="entry name" value="CBFD_NFYB_HMF"/>
    <property type="match status" value="1"/>
</dbReference>
<dbReference type="SUPFAM" id="SSF47113">
    <property type="entry name" value="Histone-fold"/>
    <property type="match status" value="1"/>
</dbReference>
<name>NFYC7_ARATH</name>
<feature type="chain" id="PRO_0000218256" description="Nuclear transcription factor Y subunit C-7">
    <location>
        <begin position="1"/>
        <end position="212"/>
    </location>
</feature>
<feature type="region of interest" description="Disordered" evidence="2">
    <location>
        <begin position="1"/>
        <end position="23"/>
    </location>
</feature>
<feature type="region of interest" description="Disordered" evidence="2">
    <location>
        <begin position="190"/>
        <end position="212"/>
    </location>
</feature>
<feature type="compositionally biased region" description="Polar residues" evidence="2">
    <location>
        <begin position="1"/>
        <end position="10"/>
    </location>
</feature>
<comment type="function">
    <text evidence="1">Stimulates the transcription of various genes by recognizing and binding to a CCAAT motif in promoters.</text>
</comment>
<comment type="subunit">
    <text evidence="1">Heterotrimeric transcription factor composed of three components, NF-YA, NF-YB and NF-YC. NF-YB and NF-YC must interact and dimerize for NF-YA association and DNA binding (By similarity).</text>
</comment>
<comment type="interaction">
    <interactant intactId="EBI-2466133">
        <id>Q9FGP8</id>
    </interactant>
    <interactant intactId="EBI-2126009">
        <id>Q9SLG0</id>
        <label>NFYB1</label>
    </interactant>
    <organismsDiffer>false</organismsDiffer>
    <experiments>3</experiments>
</comment>
<comment type="interaction">
    <interactant intactId="EBI-2466133">
        <id>Q9FGP8</id>
    </interactant>
    <interactant intactId="EBI-2475824">
        <id>Q67XJ2</id>
        <label>NFYB10</label>
    </interactant>
    <organismsDiffer>false</organismsDiffer>
    <experiments>3</experiments>
</comment>
<comment type="interaction">
    <interactant intactId="EBI-2466133">
        <id>Q9FGP8</id>
    </interactant>
    <interactant intactId="EBI-15192505">
        <id>Q9FGJ3</id>
        <label>NFYB2</label>
    </interactant>
    <organismsDiffer>false</organismsDiffer>
    <experiments>3</experiments>
</comment>
<comment type="interaction">
    <interactant intactId="EBI-2466133">
        <id>Q9FGP8</id>
    </interactant>
    <interactant intactId="EBI-15191739">
        <id>Q84W66-2</id>
        <label>NFYB6</label>
    </interactant>
    <organismsDiffer>false</organismsDiffer>
    <experiments>3</experiments>
</comment>
<comment type="interaction">
    <interactant intactId="EBI-2466133">
        <id>Q9FGP8</id>
    </interactant>
    <interactant intactId="EBI-4459822">
        <id>Q9SIT9</id>
        <label>NFYB7</label>
    </interactant>
    <organismsDiffer>false</organismsDiffer>
    <experiments>3</experiments>
</comment>
<comment type="interaction">
    <interactant intactId="EBI-2466133">
        <id>Q9FGP8</id>
    </interactant>
    <interactant intactId="EBI-15192579">
        <id>Q8VYK4</id>
        <label>NFYB8</label>
    </interactant>
    <organismsDiffer>false</organismsDiffer>
    <experiments>3</experiments>
</comment>
<comment type="subcellular location">
    <subcellularLocation>
        <location evidence="1">Nucleus</location>
    </subcellularLocation>
</comment>
<comment type="tissue specificity">
    <text evidence="3">Expressed in flowers.</text>
</comment>
<comment type="similarity">
    <text evidence="4">Belongs to the NFYC/HAP5 subunit family.</text>
</comment>
<organism>
    <name type="scientific">Arabidopsis thaliana</name>
    <name type="common">Mouse-ear cress</name>
    <dbReference type="NCBI Taxonomy" id="3702"/>
    <lineage>
        <taxon>Eukaryota</taxon>
        <taxon>Viridiplantae</taxon>
        <taxon>Streptophyta</taxon>
        <taxon>Embryophyta</taxon>
        <taxon>Tracheophyta</taxon>
        <taxon>Spermatophyta</taxon>
        <taxon>Magnoliopsida</taxon>
        <taxon>eudicotyledons</taxon>
        <taxon>Gunneridae</taxon>
        <taxon>Pentapetalae</taxon>
        <taxon>rosids</taxon>
        <taxon>malvids</taxon>
        <taxon>Brassicales</taxon>
        <taxon>Brassicaceae</taxon>
        <taxon>Camelineae</taxon>
        <taxon>Arabidopsis</taxon>
    </lineage>
</organism>
<keyword id="KW-0010">Activator</keyword>
<keyword id="KW-0238">DNA-binding</keyword>
<keyword id="KW-0539">Nucleus</keyword>
<keyword id="KW-1185">Reference proteome</keyword>
<keyword id="KW-0804">Transcription</keyword>
<keyword id="KW-0805">Transcription regulation</keyword>
<proteinExistence type="evidence at protein level"/>
<evidence type="ECO:0000250" key="1"/>
<evidence type="ECO:0000256" key="2">
    <source>
        <dbReference type="SAM" id="MobiDB-lite"/>
    </source>
</evidence>
<evidence type="ECO:0000269" key="3">
    <source>
    </source>
</evidence>
<evidence type="ECO:0000305" key="4"/>
<gene>
    <name type="primary">NFYC7</name>
    <name type="ordered locus">At5g50470</name>
    <name type="ORF">MBA10.2</name>
</gene>
<sequence length="212" mass="23195">MEENNGNNNHYLPQPSSSQLPPPPLYYQSMPLPSYSLPLPYSPQMRNYWIAQMGNATDVKHHAFPLTRIKKIMKSNPEVNMVTAEAPVLISKACEMLILDLTMRSWLHTVEGGRQTLKRSDTLTRSDISAATTRSFKFTFLGDVVPRDPSVVTDDPVLHPDGEVLPPGTVIGYPVFDCNGVYASPPQMQEWPAVPGDGEEAAGEIGGSSGGN</sequence>
<reference key="1">
    <citation type="submission" date="1999-04" db="EMBL/GenBank/DDBJ databases">
        <title>Structural analysis of Arabidopsis thaliana chromosome 5. XI.</title>
        <authorList>
            <person name="Kaneko T."/>
            <person name="Katoh T."/>
            <person name="Asamizu E."/>
            <person name="Sato S."/>
            <person name="Nakamura Y."/>
            <person name="Kotani H."/>
            <person name="Tabata S."/>
        </authorList>
    </citation>
    <scope>NUCLEOTIDE SEQUENCE [LARGE SCALE GENOMIC DNA]</scope>
    <source>
        <strain>cv. Columbia</strain>
    </source>
</reference>
<reference key="2">
    <citation type="journal article" date="2017" name="Plant J.">
        <title>Araport11: a complete reannotation of the Arabidopsis thaliana reference genome.</title>
        <authorList>
            <person name="Cheng C.Y."/>
            <person name="Krishnakumar V."/>
            <person name="Chan A.P."/>
            <person name="Thibaud-Nissen F."/>
            <person name="Schobel S."/>
            <person name="Town C.D."/>
        </authorList>
    </citation>
    <scope>GENOME REANNOTATION</scope>
    <source>
        <strain>cv. Columbia</strain>
    </source>
</reference>
<reference key="3">
    <citation type="submission" date="2005-05" db="EMBL/GenBank/DDBJ databases">
        <authorList>
            <person name="Underwood B.A."/>
            <person name="Xiao Y.-L."/>
            <person name="Moskal W.A. Jr."/>
            <person name="Monaghan E.L."/>
            <person name="Wang W."/>
            <person name="Redman J.C."/>
            <person name="Wu H.C."/>
            <person name="Utterback T."/>
            <person name="Town C.D."/>
        </authorList>
    </citation>
    <scope>NUCLEOTIDE SEQUENCE [LARGE SCALE MRNA]</scope>
    <source>
        <strain>cv. Columbia</strain>
    </source>
</reference>
<reference key="4">
    <citation type="journal article" date="2001" name="Gene">
        <title>Regulation of the CCAAT-binding NF-Y subunits in Arabidopsis thaliana.</title>
        <authorList>
            <person name="Gusmaroli G."/>
            <person name="Tonelli C."/>
            <person name="Mantovani R."/>
        </authorList>
    </citation>
    <scope>TISSUE SPECIFICITY</scope>
</reference>
<reference key="5">
    <citation type="journal article" date="2002" name="Gene">
        <title>Regulation of novel members of the Arabidopsis thaliana CCAAT-binding nuclear factor Y subunits.</title>
        <authorList>
            <person name="Gusmaroli G."/>
            <person name="Tonelli C."/>
            <person name="Mantovani R."/>
        </authorList>
    </citation>
    <scope>GENE FAMILY</scope>
    <scope>NOMENCLATURE</scope>
</reference>
<protein>
    <recommendedName>
        <fullName>Nuclear transcription factor Y subunit C-7</fullName>
        <shortName>AtNF-YC-7</shortName>
    </recommendedName>
</protein>
<accession>Q9FGP8</accession>